<evidence type="ECO:0000255" key="1">
    <source>
        <dbReference type="HAMAP-Rule" id="MF_00453"/>
    </source>
</evidence>
<name>PCKA_GEOKA</name>
<organism>
    <name type="scientific">Geobacillus kaustophilus (strain HTA426)</name>
    <dbReference type="NCBI Taxonomy" id="235909"/>
    <lineage>
        <taxon>Bacteria</taxon>
        <taxon>Bacillati</taxon>
        <taxon>Bacillota</taxon>
        <taxon>Bacilli</taxon>
        <taxon>Bacillales</taxon>
        <taxon>Anoxybacillaceae</taxon>
        <taxon>Geobacillus</taxon>
        <taxon>Geobacillus thermoleovorans group</taxon>
    </lineage>
</organism>
<sequence>MGIANMTNKLDLLLQKPYVHHQLSVAELVEKVLQRNEGRLTHTGAVAVTTGKYTGRSPKDKYIVEEPSTKQTIDWGAVNQPMSPETFDKLYDKVLDYLMKKDELFVFKGFAGADPKYRLPIQVVNEFAWHNLFVHQLFIRPSAAELAAHEPQFTVICAPNFKADPKVDGTRSEAFIIISFERRTVLIGGTEYAGEMKKSIFSVMNYLLPEQGILPMHCSANVGQEGDVALFFGLSGTGKTTLSTDPNRRLIGDDEHGWSNRGIFNIEGGCYAKCINLSREKEPQIFDAIGFGAVLENVVLDDATRVPNYDDGTLTENTRAAYPLQAIKNIVDPSVAGHPSTIVFLTADAFGVLPPISKLTREQAMYHFLSGYTSKLAGTERGVTEPEATFSTCFGAPFLPRPAVEYAEMLGQKIAEHNVRVFLVNTGWTGGPYGVGSRMKLAYTRAMVQAAVEGELDNVETVQDPIFGLAIPSHVPGVPDDVLQPQNTWADKQAYEQKAKELAQKFRANFRKFAHIDPTIEKLGGPLV</sequence>
<reference key="1">
    <citation type="journal article" date="2004" name="Nucleic Acids Res.">
        <title>Thermoadaptation trait revealed by the genome sequence of thermophilic Geobacillus kaustophilus.</title>
        <authorList>
            <person name="Takami H."/>
            <person name="Takaki Y."/>
            <person name="Chee G.-J."/>
            <person name="Nishi S."/>
            <person name="Shimamura S."/>
            <person name="Suzuki H."/>
            <person name="Matsui S."/>
            <person name="Uchiyama I."/>
        </authorList>
    </citation>
    <scope>NUCLEOTIDE SEQUENCE [LARGE SCALE GENOMIC DNA]</scope>
    <source>
        <strain>HTA426</strain>
    </source>
</reference>
<accession>Q5KW01</accession>
<proteinExistence type="inferred from homology"/>
<gene>
    <name evidence="1" type="primary">pckA</name>
    <name type="ordered locus">GK2850</name>
</gene>
<feature type="chain" id="PRO_0000236923" description="Phosphoenolpyruvate carboxykinase (ATP)">
    <location>
        <begin position="1"/>
        <end position="528"/>
    </location>
</feature>
<feature type="binding site" evidence="1">
    <location>
        <position position="56"/>
    </location>
    <ligand>
        <name>substrate</name>
    </ligand>
</feature>
<feature type="binding site" evidence="1">
    <location>
        <position position="192"/>
    </location>
    <ligand>
        <name>substrate</name>
    </ligand>
</feature>
<feature type="binding site" evidence="1">
    <location>
        <position position="198"/>
    </location>
    <ligand>
        <name>ATP</name>
        <dbReference type="ChEBI" id="CHEBI:30616"/>
    </ligand>
</feature>
<feature type="binding site" evidence="1">
    <location>
        <position position="198"/>
    </location>
    <ligand>
        <name>Mn(2+)</name>
        <dbReference type="ChEBI" id="CHEBI:29035"/>
    </ligand>
</feature>
<feature type="binding site" evidence="1">
    <location>
        <position position="198"/>
    </location>
    <ligand>
        <name>substrate</name>
    </ligand>
</feature>
<feature type="binding site" evidence="1">
    <location>
        <position position="217"/>
    </location>
    <ligand>
        <name>ATP</name>
        <dbReference type="ChEBI" id="CHEBI:30616"/>
    </ligand>
</feature>
<feature type="binding site" evidence="1">
    <location>
        <position position="217"/>
    </location>
    <ligand>
        <name>Mn(2+)</name>
        <dbReference type="ChEBI" id="CHEBI:29035"/>
    </ligand>
</feature>
<feature type="binding site" evidence="1">
    <location>
        <begin position="233"/>
        <end position="241"/>
    </location>
    <ligand>
        <name>ATP</name>
        <dbReference type="ChEBI" id="CHEBI:30616"/>
    </ligand>
</feature>
<feature type="binding site" evidence="1">
    <location>
        <position position="254"/>
    </location>
    <ligand>
        <name>Mn(2+)</name>
        <dbReference type="ChEBI" id="CHEBI:29035"/>
    </ligand>
</feature>
<feature type="binding site" evidence="1">
    <location>
        <position position="282"/>
    </location>
    <ligand>
        <name>ATP</name>
        <dbReference type="ChEBI" id="CHEBI:30616"/>
    </ligand>
</feature>
<feature type="binding site" evidence="1">
    <location>
        <position position="319"/>
    </location>
    <ligand>
        <name>ATP</name>
        <dbReference type="ChEBI" id="CHEBI:30616"/>
    </ligand>
</feature>
<feature type="binding site" evidence="1">
    <location>
        <position position="319"/>
    </location>
    <ligand>
        <name>substrate</name>
    </ligand>
</feature>
<feature type="binding site" evidence="1">
    <location>
        <position position="444"/>
    </location>
    <ligand>
        <name>ATP</name>
        <dbReference type="ChEBI" id="CHEBI:30616"/>
    </ligand>
</feature>
<protein>
    <recommendedName>
        <fullName evidence="1">Phosphoenolpyruvate carboxykinase (ATP)</fullName>
        <shortName evidence="1">PCK</shortName>
        <shortName evidence="1">PEP carboxykinase</shortName>
        <shortName evidence="1">PEPCK</shortName>
        <ecNumber evidence="1">4.1.1.49</ecNumber>
    </recommendedName>
</protein>
<dbReference type="EC" id="4.1.1.49" evidence="1"/>
<dbReference type="EMBL" id="BA000043">
    <property type="protein sequence ID" value="BAD77135.1"/>
    <property type="molecule type" value="Genomic_DNA"/>
</dbReference>
<dbReference type="RefSeq" id="WP_011232322.1">
    <property type="nucleotide sequence ID" value="NC_006510.1"/>
</dbReference>
<dbReference type="SMR" id="Q5KW01"/>
<dbReference type="STRING" id="235909.GK2850"/>
<dbReference type="KEGG" id="gka:GK2850"/>
<dbReference type="PATRIC" id="fig|235909.7.peg.3043"/>
<dbReference type="eggNOG" id="COG1866">
    <property type="taxonomic scope" value="Bacteria"/>
</dbReference>
<dbReference type="HOGENOM" id="CLU_018247_0_1_9"/>
<dbReference type="UniPathway" id="UPA00138"/>
<dbReference type="Proteomes" id="UP000001172">
    <property type="component" value="Chromosome"/>
</dbReference>
<dbReference type="GO" id="GO:0005829">
    <property type="term" value="C:cytosol"/>
    <property type="evidence" value="ECO:0007669"/>
    <property type="project" value="TreeGrafter"/>
</dbReference>
<dbReference type="GO" id="GO:0005524">
    <property type="term" value="F:ATP binding"/>
    <property type="evidence" value="ECO:0007669"/>
    <property type="project" value="UniProtKB-UniRule"/>
</dbReference>
<dbReference type="GO" id="GO:0046872">
    <property type="term" value="F:metal ion binding"/>
    <property type="evidence" value="ECO:0007669"/>
    <property type="project" value="UniProtKB-KW"/>
</dbReference>
<dbReference type="GO" id="GO:0004612">
    <property type="term" value="F:phosphoenolpyruvate carboxykinase (ATP) activity"/>
    <property type="evidence" value="ECO:0007669"/>
    <property type="project" value="UniProtKB-UniRule"/>
</dbReference>
<dbReference type="GO" id="GO:0006094">
    <property type="term" value="P:gluconeogenesis"/>
    <property type="evidence" value="ECO:0007669"/>
    <property type="project" value="UniProtKB-UniRule"/>
</dbReference>
<dbReference type="CDD" id="cd00484">
    <property type="entry name" value="PEPCK_ATP"/>
    <property type="match status" value="1"/>
</dbReference>
<dbReference type="FunFam" id="2.170.8.10:FF:000001">
    <property type="entry name" value="Phosphoenolpyruvate carboxykinase (ATP)"/>
    <property type="match status" value="1"/>
</dbReference>
<dbReference type="FunFam" id="3.40.449.10:FF:000001">
    <property type="entry name" value="Phosphoenolpyruvate carboxykinase (ATP)"/>
    <property type="match status" value="1"/>
</dbReference>
<dbReference type="Gene3D" id="3.90.228.20">
    <property type="match status" value="1"/>
</dbReference>
<dbReference type="Gene3D" id="3.40.449.10">
    <property type="entry name" value="Phosphoenolpyruvate Carboxykinase, domain 1"/>
    <property type="match status" value="1"/>
</dbReference>
<dbReference type="Gene3D" id="2.170.8.10">
    <property type="entry name" value="Phosphoenolpyruvate Carboxykinase, domain 2"/>
    <property type="match status" value="1"/>
</dbReference>
<dbReference type="HAMAP" id="MF_00453">
    <property type="entry name" value="PEPCK_ATP"/>
    <property type="match status" value="1"/>
</dbReference>
<dbReference type="InterPro" id="IPR001272">
    <property type="entry name" value="PEP_carboxykinase_ATP"/>
</dbReference>
<dbReference type="InterPro" id="IPR013035">
    <property type="entry name" value="PEP_carboxykinase_C"/>
</dbReference>
<dbReference type="InterPro" id="IPR008210">
    <property type="entry name" value="PEP_carboxykinase_N"/>
</dbReference>
<dbReference type="InterPro" id="IPR015994">
    <property type="entry name" value="PEPCK_ATP_CS"/>
</dbReference>
<dbReference type="NCBIfam" id="TIGR00224">
    <property type="entry name" value="pckA"/>
    <property type="match status" value="1"/>
</dbReference>
<dbReference type="NCBIfam" id="NF006820">
    <property type="entry name" value="PRK09344.1-2"/>
    <property type="match status" value="1"/>
</dbReference>
<dbReference type="NCBIfam" id="NF006821">
    <property type="entry name" value="PRK09344.1-3"/>
    <property type="match status" value="1"/>
</dbReference>
<dbReference type="PANTHER" id="PTHR30031:SF0">
    <property type="entry name" value="PHOSPHOENOLPYRUVATE CARBOXYKINASE (ATP)"/>
    <property type="match status" value="1"/>
</dbReference>
<dbReference type="PANTHER" id="PTHR30031">
    <property type="entry name" value="PHOSPHOENOLPYRUVATE CARBOXYKINASE ATP"/>
    <property type="match status" value="1"/>
</dbReference>
<dbReference type="Pfam" id="PF01293">
    <property type="entry name" value="PEPCK_ATP"/>
    <property type="match status" value="1"/>
</dbReference>
<dbReference type="PIRSF" id="PIRSF006294">
    <property type="entry name" value="PEP_crbxkin"/>
    <property type="match status" value="1"/>
</dbReference>
<dbReference type="SUPFAM" id="SSF68923">
    <property type="entry name" value="PEP carboxykinase N-terminal domain"/>
    <property type="match status" value="1"/>
</dbReference>
<dbReference type="SUPFAM" id="SSF53795">
    <property type="entry name" value="PEP carboxykinase-like"/>
    <property type="match status" value="1"/>
</dbReference>
<dbReference type="PROSITE" id="PS00532">
    <property type="entry name" value="PEPCK_ATP"/>
    <property type="match status" value="1"/>
</dbReference>
<comment type="function">
    <text evidence="1">Involved in the gluconeogenesis. Catalyzes the conversion of oxaloacetate (OAA) to phosphoenolpyruvate (PEP) through direct phosphoryl transfer between the nucleoside triphosphate and OAA.</text>
</comment>
<comment type="catalytic activity">
    <reaction evidence="1">
        <text>oxaloacetate + ATP = phosphoenolpyruvate + ADP + CO2</text>
        <dbReference type="Rhea" id="RHEA:18617"/>
        <dbReference type="ChEBI" id="CHEBI:16452"/>
        <dbReference type="ChEBI" id="CHEBI:16526"/>
        <dbReference type="ChEBI" id="CHEBI:30616"/>
        <dbReference type="ChEBI" id="CHEBI:58702"/>
        <dbReference type="ChEBI" id="CHEBI:456216"/>
        <dbReference type="EC" id="4.1.1.49"/>
    </reaction>
</comment>
<comment type="cofactor">
    <cofactor evidence="1">
        <name>Mn(2+)</name>
        <dbReference type="ChEBI" id="CHEBI:29035"/>
    </cofactor>
    <text evidence="1">Binds 1 Mn(2+) ion per subunit.</text>
</comment>
<comment type="pathway">
    <text evidence="1">Carbohydrate biosynthesis; gluconeogenesis.</text>
</comment>
<comment type="subcellular location">
    <subcellularLocation>
        <location evidence="1">Cytoplasm</location>
    </subcellularLocation>
</comment>
<comment type="similarity">
    <text evidence="1">Belongs to the phosphoenolpyruvate carboxykinase (ATP) family.</text>
</comment>
<keyword id="KW-0067">ATP-binding</keyword>
<keyword id="KW-0963">Cytoplasm</keyword>
<keyword id="KW-0210">Decarboxylase</keyword>
<keyword id="KW-0312">Gluconeogenesis</keyword>
<keyword id="KW-0456">Lyase</keyword>
<keyword id="KW-0464">Manganese</keyword>
<keyword id="KW-0479">Metal-binding</keyword>
<keyword id="KW-0547">Nucleotide-binding</keyword>
<keyword id="KW-1185">Reference proteome</keyword>